<feature type="chain" id="PRO_0000187095" description="Protein LSM14 homolog B">
    <location>
        <begin position="1"/>
        <end position="382"/>
    </location>
</feature>
<feature type="domain" description="Sm" evidence="4">
    <location>
        <begin position="1"/>
        <end position="81"/>
    </location>
</feature>
<feature type="domain" description="DFDF" evidence="3">
    <location>
        <begin position="238"/>
        <end position="274"/>
    </location>
</feature>
<feature type="region of interest" description="Disordered" evidence="5">
    <location>
        <begin position="164"/>
        <end position="243"/>
    </location>
</feature>
<feature type="region of interest" description="Disordered" evidence="5">
    <location>
        <begin position="270"/>
        <end position="310"/>
    </location>
</feature>
<feature type="region of interest" description="Disordered" evidence="5">
    <location>
        <begin position="354"/>
        <end position="382"/>
    </location>
</feature>
<feature type="short sequence motif" description="FDF">
    <location>
        <begin position="300"/>
        <end position="302"/>
    </location>
</feature>
<feature type="short sequence motif" description="FFD box">
    <location>
        <begin position="309"/>
        <end position="325"/>
    </location>
</feature>
<feature type="short sequence motif" description="TFG box">
    <location>
        <begin position="327"/>
        <end position="347"/>
    </location>
</feature>
<feature type="compositionally biased region" description="Low complexity" evidence="5">
    <location>
        <begin position="166"/>
        <end position="177"/>
    </location>
</feature>
<feature type="compositionally biased region" description="Basic residues" evidence="5">
    <location>
        <begin position="216"/>
        <end position="232"/>
    </location>
</feature>
<feature type="compositionally biased region" description="Basic and acidic residues" evidence="5">
    <location>
        <begin position="270"/>
        <end position="289"/>
    </location>
</feature>
<feature type="compositionally biased region" description="Polar residues" evidence="5">
    <location>
        <begin position="368"/>
        <end position="382"/>
    </location>
</feature>
<name>LS14B_XENTR</name>
<protein>
    <recommendedName>
        <fullName>Protein LSM14 homolog B</fullName>
    </recommendedName>
    <alternativeName>
        <fullName>Protein FAM61B homolog</fullName>
    </alternativeName>
    <alternativeName>
        <fullName>RNA-associated protein 55B</fullName>
        <shortName>RAP55B</shortName>
    </alternativeName>
</protein>
<dbReference type="EMBL" id="BC093463">
    <property type="protein sequence ID" value="AAH93463.1"/>
    <property type="molecule type" value="mRNA"/>
</dbReference>
<dbReference type="RefSeq" id="NP_001025676.1">
    <property type="nucleotide sequence ID" value="NM_001030505.1"/>
</dbReference>
<dbReference type="SMR" id="Q566L7"/>
<dbReference type="FunCoup" id="Q566L7">
    <property type="interactions" value="2595"/>
</dbReference>
<dbReference type="STRING" id="8364.ENSXETP00000018235"/>
<dbReference type="DNASU" id="595068"/>
<dbReference type="GeneID" id="595068"/>
<dbReference type="KEGG" id="xtr:595068"/>
<dbReference type="AGR" id="Xenbase:XB-GENE-5893304"/>
<dbReference type="CTD" id="149986"/>
<dbReference type="Xenbase" id="XB-GENE-5893304">
    <property type="gene designation" value="lsm14b"/>
</dbReference>
<dbReference type="HOGENOM" id="CLU_019221_0_1_1"/>
<dbReference type="InParanoid" id="Q566L7"/>
<dbReference type="OrthoDB" id="21539at2759"/>
<dbReference type="Proteomes" id="UP000008143">
    <property type="component" value="Chromosome 10"/>
</dbReference>
<dbReference type="Bgee" id="ENSXETG00000001997">
    <property type="expression patterns" value="Expressed in 4-cell stage embryo and 12 other cell types or tissues"/>
</dbReference>
<dbReference type="GO" id="GO:1990904">
    <property type="term" value="C:ribonucleoprotein complex"/>
    <property type="evidence" value="ECO:0000250"/>
    <property type="project" value="UniProtKB"/>
</dbReference>
<dbReference type="GO" id="GO:0003723">
    <property type="term" value="F:RNA binding"/>
    <property type="evidence" value="ECO:0007669"/>
    <property type="project" value="InterPro"/>
</dbReference>
<dbReference type="GO" id="GO:0006417">
    <property type="term" value="P:regulation of translation"/>
    <property type="evidence" value="ECO:0007669"/>
    <property type="project" value="UniProtKB-KW"/>
</dbReference>
<dbReference type="CDD" id="cd01736">
    <property type="entry name" value="LSm14_N"/>
    <property type="match status" value="1"/>
</dbReference>
<dbReference type="FunFam" id="2.30.30.100:FF:000006">
    <property type="entry name" value="Protein LSM14 homolog A isoform b"/>
    <property type="match status" value="1"/>
</dbReference>
<dbReference type="Gene3D" id="2.30.30.100">
    <property type="match status" value="1"/>
</dbReference>
<dbReference type="InterPro" id="IPR025762">
    <property type="entry name" value="DFDF"/>
</dbReference>
<dbReference type="InterPro" id="IPR019050">
    <property type="entry name" value="FDF_dom"/>
</dbReference>
<dbReference type="InterPro" id="IPR025761">
    <property type="entry name" value="FFD_box"/>
</dbReference>
<dbReference type="InterPro" id="IPR025609">
    <property type="entry name" value="Lsm14-like_N"/>
</dbReference>
<dbReference type="InterPro" id="IPR010920">
    <property type="entry name" value="LSM_dom_sf"/>
</dbReference>
<dbReference type="InterPro" id="IPR047575">
    <property type="entry name" value="Sm"/>
</dbReference>
<dbReference type="InterPro" id="IPR025768">
    <property type="entry name" value="TFG_box"/>
</dbReference>
<dbReference type="PANTHER" id="PTHR13586:SF1">
    <property type="entry name" value="PROTEIN LSM14 HOMOLOG B"/>
    <property type="match status" value="1"/>
</dbReference>
<dbReference type="PANTHER" id="PTHR13586">
    <property type="entry name" value="SCD6 PROTEIN-RELATED"/>
    <property type="match status" value="1"/>
</dbReference>
<dbReference type="Pfam" id="PF09532">
    <property type="entry name" value="FDF"/>
    <property type="match status" value="1"/>
</dbReference>
<dbReference type="Pfam" id="PF12701">
    <property type="entry name" value="LSM14"/>
    <property type="match status" value="1"/>
</dbReference>
<dbReference type="SMART" id="SM01199">
    <property type="entry name" value="FDF"/>
    <property type="match status" value="1"/>
</dbReference>
<dbReference type="SMART" id="SM01271">
    <property type="entry name" value="LSM14"/>
    <property type="match status" value="1"/>
</dbReference>
<dbReference type="SUPFAM" id="SSF50182">
    <property type="entry name" value="Sm-like ribonucleoproteins"/>
    <property type="match status" value="1"/>
</dbReference>
<dbReference type="PROSITE" id="PS51512">
    <property type="entry name" value="DFDF"/>
    <property type="match status" value="1"/>
</dbReference>
<dbReference type="PROSITE" id="PS51513">
    <property type="entry name" value="FFD"/>
    <property type="match status" value="1"/>
</dbReference>
<dbReference type="PROSITE" id="PS52002">
    <property type="entry name" value="SM"/>
    <property type="match status" value="1"/>
</dbReference>
<dbReference type="PROSITE" id="PS51536">
    <property type="entry name" value="TFG"/>
    <property type="match status" value="1"/>
</dbReference>
<evidence type="ECO:0000250" key="1">
    <source>
        <dbReference type="UniProtKB" id="Q68FI1"/>
    </source>
</evidence>
<evidence type="ECO:0000250" key="2">
    <source>
        <dbReference type="UniProtKB" id="Q8CGC4"/>
    </source>
</evidence>
<evidence type="ECO:0000255" key="3">
    <source>
        <dbReference type="PROSITE-ProRule" id="PRU00845"/>
    </source>
</evidence>
<evidence type="ECO:0000255" key="4">
    <source>
        <dbReference type="PROSITE-ProRule" id="PRU01346"/>
    </source>
</evidence>
<evidence type="ECO:0000256" key="5">
    <source>
        <dbReference type="SAM" id="MobiDB-lite"/>
    </source>
</evidence>
<evidence type="ECO:0000305" key="6"/>
<sequence length="382" mass="42213">MSSGTPYIGSKISLISKAQIRYEGILYTIDTENSTVALAKVRSFGTEDRPTDRPAPPREEVYEYIIFRGSDIKDITVCEPPKASHALPQDPAIVQSSLGSAPSASYQSSVPYSPFRGMPTYSQLAASSLLSQQYAASLGLAGFPSIPLRKSPMVEQAVQTGPLESQAQKKVQQAKGAPVNQRGIRQSGPQSQPAPLNVPPAAAPVLGTVNDENRRPPRRRSGNRRTRNRSRGQNRPTTVKENAIKFEGDFDFETANAQFNREELDKEFKDKLNFKDEKPEKEGEEKTDSGVETQNSDGNPEEDPLGPNIYYDRSKSFFDNISSEMKSRRTTWAEERKLNTETFGVSGRFLRGRSFRGGFRGGRGSATPRRNQTTQRAGTGRV</sequence>
<proteinExistence type="evidence at transcript level"/>
<comment type="function">
    <text evidence="1 2">May be involved in the storage of translationally inactive mRNAs and protect them from degradation (By similarity). Plays a role in control of mRNA translation (By similarity).</text>
</comment>
<comment type="subunit">
    <text evidence="1">Component of a ribonucleoprotein (RNP) complex, at least composed of cpeb1, lsm14b/rap55b, ddx6/Xp54, ybx2/frgy2, pat1/P100, eif4enif1/4E-T and eif4e1b. Different translationally-repressed mRNP complexes probably exist that contain either lsm14a/rap55a or lsm14b/rap55b depending on the developmental stage. Component of a ribonucleoprotein (RNP) complex, composed at least of elavl1/elrA and/or elavl2/elrB, igf2bp3/vg1RBP, ddx6/Xp54, ybx2/frgy2, lsm14b/rap55b and, in a subset of RNP complexes, stau1/staufen (By similarity).</text>
</comment>
<comment type="similarity">
    <text evidence="6">Belongs to the LSM14 family.</text>
</comment>
<reference key="1">
    <citation type="submission" date="2005-04" db="EMBL/GenBank/DDBJ databases">
        <authorList>
            <consortium name="NIH - Xenopus Gene Collection (XGC) project"/>
        </authorList>
    </citation>
    <scope>NUCLEOTIDE SEQUENCE [LARGE SCALE MRNA]</scope>
    <source>
        <tissue>Gastrula</tissue>
    </source>
</reference>
<organism>
    <name type="scientific">Xenopus tropicalis</name>
    <name type="common">Western clawed frog</name>
    <name type="synonym">Silurana tropicalis</name>
    <dbReference type="NCBI Taxonomy" id="8364"/>
    <lineage>
        <taxon>Eukaryota</taxon>
        <taxon>Metazoa</taxon>
        <taxon>Chordata</taxon>
        <taxon>Craniata</taxon>
        <taxon>Vertebrata</taxon>
        <taxon>Euteleostomi</taxon>
        <taxon>Amphibia</taxon>
        <taxon>Batrachia</taxon>
        <taxon>Anura</taxon>
        <taxon>Pipoidea</taxon>
        <taxon>Pipidae</taxon>
        <taxon>Xenopodinae</taxon>
        <taxon>Xenopus</taxon>
        <taxon>Silurana</taxon>
    </lineage>
</organism>
<accession>Q566L7</accession>
<keyword id="KW-0217">Developmental protein</keyword>
<keyword id="KW-1185">Reference proteome</keyword>
<keyword id="KW-0687">Ribonucleoprotein</keyword>
<keyword id="KW-0810">Translation regulation</keyword>
<gene>
    <name type="primary">lsm14b</name>
    <name type="synonym">fam61b</name>
    <name type="synonym">rap55b</name>
</gene>